<comment type="function">
    <text evidence="1">Produces ATP from ADP in the presence of a proton gradient across the membrane. The alpha chain is a regulatory subunit.</text>
</comment>
<comment type="catalytic activity">
    <reaction evidence="1">
        <text>ATP + H2O + 4 H(+)(in) = ADP + phosphate + 5 H(+)(out)</text>
        <dbReference type="Rhea" id="RHEA:57720"/>
        <dbReference type="ChEBI" id="CHEBI:15377"/>
        <dbReference type="ChEBI" id="CHEBI:15378"/>
        <dbReference type="ChEBI" id="CHEBI:30616"/>
        <dbReference type="ChEBI" id="CHEBI:43474"/>
        <dbReference type="ChEBI" id="CHEBI:456216"/>
        <dbReference type="EC" id="7.1.2.2"/>
    </reaction>
</comment>
<comment type="subunit">
    <text evidence="1">F-type ATPases have 2 components, CF(1) - the catalytic core - and CF(0) - the membrane proton channel. CF(1) has five subunits: alpha(3), beta(3), gamma(1), delta(1), epsilon(1). CF(0) has three main subunits: a(1), b(2) and c(9-12). The alpha and beta chains form an alternating ring which encloses part of the gamma chain. CF(1) is attached to CF(0) by a central stalk formed by the gamma and epsilon chains, while a peripheral stalk is formed by the delta and b chains.</text>
</comment>
<comment type="subcellular location">
    <subcellularLocation>
        <location evidence="1">Cell membrane</location>
        <topology evidence="1">Peripheral membrane protein</topology>
    </subcellularLocation>
</comment>
<comment type="similarity">
    <text evidence="1">Belongs to the ATPase alpha/beta chains family.</text>
</comment>
<organism>
    <name type="scientific">Limosilactobacillus reuteri (strain DSM 20016)</name>
    <name type="common">Lactobacillus reuteri</name>
    <dbReference type="NCBI Taxonomy" id="557436"/>
    <lineage>
        <taxon>Bacteria</taxon>
        <taxon>Bacillati</taxon>
        <taxon>Bacillota</taxon>
        <taxon>Bacilli</taxon>
        <taxon>Lactobacillales</taxon>
        <taxon>Lactobacillaceae</taxon>
        <taxon>Limosilactobacillus</taxon>
    </lineage>
</organism>
<protein>
    <recommendedName>
        <fullName evidence="1">ATP synthase subunit alpha</fullName>
        <ecNumber evidence="1">7.1.2.2</ecNumber>
    </recommendedName>
    <alternativeName>
        <fullName evidence="1">ATP synthase F1 sector subunit alpha</fullName>
    </alternativeName>
    <alternativeName>
        <fullName evidence="1">F-ATPase subunit alpha</fullName>
    </alternativeName>
</protein>
<accession>A5VIQ9</accession>
<dbReference type="EC" id="7.1.2.2" evidence="1"/>
<dbReference type="EMBL" id="CP000705">
    <property type="protein sequence ID" value="ABQ82733.1"/>
    <property type="molecule type" value="Genomic_DNA"/>
</dbReference>
<dbReference type="RefSeq" id="WP_003666568.1">
    <property type="nucleotide sequence ID" value="NZ_AZDD01000022.1"/>
</dbReference>
<dbReference type="SMR" id="A5VIQ9"/>
<dbReference type="STRING" id="557436.Lreu_0465"/>
<dbReference type="GeneID" id="77192080"/>
<dbReference type="KEGG" id="lre:Lreu_0465"/>
<dbReference type="PATRIC" id="fig|557436.17.peg.843"/>
<dbReference type="eggNOG" id="COG0056">
    <property type="taxonomic scope" value="Bacteria"/>
</dbReference>
<dbReference type="HOGENOM" id="CLU_010091_2_1_9"/>
<dbReference type="Proteomes" id="UP000001991">
    <property type="component" value="Chromosome"/>
</dbReference>
<dbReference type="GO" id="GO:0005886">
    <property type="term" value="C:plasma membrane"/>
    <property type="evidence" value="ECO:0007669"/>
    <property type="project" value="UniProtKB-SubCell"/>
</dbReference>
<dbReference type="GO" id="GO:0045259">
    <property type="term" value="C:proton-transporting ATP synthase complex"/>
    <property type="evidence" value="ECO:0007669"/>
    <property type="project" value="UniProtKB-KW"/>
</dbReference>
<dbReference type="GO" id="GO:0043531">
    <property type="term" value="F:ADP binding"/>
    <property type="evidence" value="ECO:0007669"/>
    <property type="project" value="TreeGrafter"/>
</dbReference>
<dbReference type="GO" id="GO:0005524">
    <property type="term" value="F:ATP binding"/>
    <property type="evidence" value="ECO:0007669"/>
    <property type="project" value="UniProtKB-UniRule"/>
</dbReference>
<dbReference type="GO" id="GO:0046933">
    <property type="term" value="F:proton-transporting ATP synthase activity, rotational mechanism"/>
    <property type="evidence" value="ECO:0007669"/>
    <property type="project" value="UniProtKB-UniRule"/>
</dbReference>
<dbReference type="CDD" id="cd18113">
    <property type="entry name" value="ATP-synt_F1_alpha_C"/>
    <property type="match status" value="1"/>
</dbReference>
<dbReference type="CDD" id="cd18116">
    <property type="entry name" value="ATP-synt_F1_alpha_N"/>
    <property type="match status" value="1"/>
</dbReference>
<dbReference type="CDD" id="cd01132">
    <property type="entry name" value="F1-ATPase_alpha_CD"/>
    <property type="match status" value="1"/>
</dbReference>
<dbReference type="FunFam" id="1.20.150.20:FF:000001">
    <property type="entry name" value="ATP synthase subunit alpha"/>
    <property type="match status" value="1"/>
</dbReference>
<dbReference type="FunFam" id="2.40.30.20:FF:000001">
    <property type="entry name" value="ATP synthase subunit alpha"/>
    <property type="match status" value="1"/>
</dbReference>
<dbReference type="FunFam" id="3.40.50.300:FF:000002">
    <property type="entry name" value="ATP synthase subunit alpha"/>
    <property type="match status" value="1"/>
</dbReference>
<dbReference type="Gene3D" id="2.40.30.20">
    <property type="match status" value="1"/>
</dbReference>
<dbReference type="Gene3D" id="1.20.150.20">
    <property type="entry name" value="ATP synthase alpha/beta chain, C-terminal domain"/>
    <property type="match status" value="1"/>
</dbReference>
<dbReference type="Gene3D" id="3.40.50.300">
    <property type="entry name" value="P-loop containing nucleotide triphosphate hydrolases"/>
    <property type="match status" value="1"/>
</dbReference>
<dbReference type="HAMAP" id="MF_01346">
    <property type="entry name" value="ATP_synth_alpha_bact"/>
    <property type="match status" value="1"/>
</dbReference>
<dbReference type="InterPro" id="IPR023366">
    <property type="entry name" value="ATP_synth_asu-like_sf"/>
</dbReference>
<dbReference type="InterPro" id="IPR000793">
    <property type="entry name" value="ATP_synth_asu_C"/>
</dbReference>
<dbReference type="InterPro" id="IPR038376">
    <property type="entry name" value="ATP_synth_asu_C_sf"/>
</dbReference>
<dbReference type="InterPro" id="IPR033732">
    <property type="entry name" value="ATP_synth_F1_a_nt-bd_dom"/>
</dbReference>
<dbReference type="InterPro" id="IPR005294">
    <property type="entry name" value="ATP_synth_F1_asu"/>
</dbReference>
<dbReference type="InterPro" id="IPR020003">
    <property type="entry name" value="ATPase_a/bsu_AS"/>
</dbReference>
<dbReference type="InterPro" id="IPR004100">
    <property type="entry name" value="ATPase_F1/V1/A1_a/bsu_N"/>
</dbReference>
<dbReference type="InterPro" id="IPR036121">
    <property type="entry name" value="ATPase_F1/V1/A1_a/bsu_N_sf"/>
</dbReference>
<dbReference type="InterPro" id="IPR000194">
    <property type="entry name" value="ATPase_F1/V1/A1_a/bsu_nucl-bd"/>
</dbReference>
<dbReference type="InterPro" id="IPR027417">
    <property type="entry name" value="P-loop_NTPase"/>
</dbReference>
<dbReference type="NCBIfam" id="TIGR00962">
    <property type="entry name" value="atpA"/>
    <property type="match status" value="1"/>
</dbReference>
<dbReference type="NCBIfam" id="NF009884">
    <property type="entry name" value="PRK13343.1"/>
    <property type="match status" value="1"/>
</dbReference>
<dbReference type="PANTHER" id="PTHR48082">
    <property type="entry name" value="ATP SYNTHASE SUBUNIT ALPHA, MITOCHONDRIAL"/>
    <property type="match status" value="1"/>
</dbReference>
<dbReference type="PANTHER" id="PTHR48082:SF2">
    <property type="entry name" value="ATP SYNTHASE SUBUNIT ALPHA, MITOCHONDRIAL"/>
    <property type="match status" value="1"/>
</dbReference>
<dbReference type="Pfam" id="PF00006">
    <property type="entry name" value="ATP-synt_ab"/>
    <property type="match status" value="1"/>
</dbReference>
<dbReference type="Pfam" id="PF00306">
    <property type="entry name" value="ATP-synt_ab_C"/>
    <property type="match status" value="1"/>
</dbReference>
<dbReference type="Pfam" id="PF02874">
    <property type="entry name" value="ATP-synt_ab_N"/>
    <property type="match status" value="1"/>
</dbReference>
<dbReference type="PIRSF" id="PIRSF039088">
    <property type="entry name" value="F_ATPase_subunit_alpha"/>
    <property type="match status" value="1"/>
</dbReference>
<dbReference type="SUPFAM" id="SSF47917">
    <property type="entry name" value="C-terminal domain of alpha and beta subunits of F1 ATP synthase"/>
    <property type="match status" value="1"/>
</dbReference>
<dbReference type="SUPFAM" id="SSF50615">
    <property type="entry name" value="N-terminal domain of alpha and beta subunits of F1 ATP synthase"/>
    <property type="match status" value="1"/>
</dbReference>
<dbReference type="SUPFAM" id="SSF52540">
    <property type="entry name" value="P-loop containing nucleoside triphosphate hydrolases"/>
    <property type="match status" value="1"/>
</dbReference>
<dbReference type="PROSITE" id="PS00152">
    <property type="entry name" value="ATPASE_ALPHA_BETA"/>
    <property type="match status" value="1"/>
</dbReference>
<proteinExistence type="inferred from homology"/>
<gene>
    <name evidence="1" type="primary">atpA</name>
    <name type="ordered locus">Lreu_0465</name>
</gene>
<reference key="1">
    <citation type="journal article" date="2011" name="PLoS Genet.">
        <title>The evolution of host specialization in the vertebrate gut symbiont Lactobacillus reuteri.</title>
        <authorList>
            <person name="Frese S.A."/>
            <person name="Benson A.K."/>
            <person name="Tannock G.W."/>
            <person name="Loach D.M."/>
            <person name="Kim J."/>
            <person name="Zhang M."/>
            <person name="Oh P.L."/>
            <person name="Heng N.C."/>
            <person name="Patil P.B."/>
            <person name="Juge N."/>
            <person name="Mackenzie D.A."/>
            <person name="Pearson B.M."/>
            <person name="Lapidus A."/>
            <person name="Dalin E."/>
            <person name="Tice H."/>
            <person name="Goltsman E."/>
            <person name="Land M."/>
            <person name="Hauser L."/>
            <person name="Ivanova N."/>
            <person name="Kyrpides N.C."/>
            <person name="Walter J."/>
        </authorList>
    </citation>
    <scope>NUCLEOTIDE SEQUENCE [LARGE SCALE GENOMIC DNA]</scope>
    <source>
        <strain>DSM 20016</strain>
    </source>
</reference>
<sequence length="509" mass="55227">MSIKTEEISSLIKKQLANYQDKVSVEETGTVTYVGDGVARADGLDNAMAGELLEFSNGVYGMAQNLESNDVGIVILGDYTGIREGDTVKRTGRIMEVPVGDALLGRVVDSLGRPIDGLGEIKTDKTRPIERKAPGVMERKSVSVPLQTGIKVIDALVPIGRGQRELIIGDRKTGKTAIALDTIINQKNQDVICIYVAIGQKESTVRASVETLRKYGALDYTIVVSASASNPAPMLYIAPYAGAAMGEEFMFNGKDVLIVYDDLSKQADAYRELSLILRRPPGREAYPGDIFYTHSRLLERAARLSDDLGGGSMTALPIIQTQAGDVSAYIPTNVISITDGQIFLDSDEFYAGQRPAIDAGTSVSRVGGDAQIKAMKKVAGTLRLDIASYNELASFAQFGSDLDAATQAKLARGQRTMEVLKQGLHDPLPVEEQVVTLFALSRGFIDKVEIEDVQRYESELAAYMHANHQDLYDTIKKTGKLPEGDDLQNAVAKFSETFQGTKKQVAEEK</sequence>
<feature type="chain" id="PRO_1000067714" description="ATP synthase subunit alpha">
    <location>
        <begin position="1"/>
        <end position="509"/>
    </location>
</feature>
<feature type="binding site" evidence="1">
    <location>
        <begin position="169"/>
        <end position="176"/>
    </location>
    <ligand>
        <name>ATP</name>
        <dbReference type="ChEBI" id="CHEBI:30616"/>
    </ligand>
</feature>
<feature type="site" description="Required for activity" evidence="1">
    <location>
        <position position="362"/>
    </location>
</feature>
<name>ATPA_LIMRD</name>
<evidence type="ECO:0000255" key="1">
    <source>
        <dbReference type="HAMAP-Rule" id="MF_01346"/>
    </source>
</evidence>
<keyword id="KW-0066">ATP synthesis</keyword>
<keyword id="KW-0067">ATP-binding</keyword>
<keyword id="KW-1003">Cell membrane</keyword>
<keyword id="KW-0139">CF(1)</keyword>
<keyword id="KW-0375">Hydrogen ion transport</keyword>
<keyword id="KW-0406">Ion transport</keyword>
<keyword id="KW-0472">Membrane</keyword>
<keyword id="KW-0547">Nucleotide-binding</keyword>
<keyword id="KW-1185">Reference proteome</keyword>
<keyword id="KW-1278">Translocase</keyword>
<keyword id="KW-0813">Transport</keyword>